<organism>
    <name type="scientific">Cupriavidus metallidurans (strain ATCC 43123 / DSM 2839 / NBRC 102507 / CH34)</name>
    <name type="common">Ralstonia metallidurans</name>
    <dbReference type="NCBI Taxonomy" id="266264"/>
    <lineage>
        <taxon>Bacteria</taxon>
        <taxon>Pseudomonadati</taxon>
        <taxon>Pseudomonadota</taxon>
        <taxon>Betaproteobacteria</taxon>
        <taxon>Burkholderiales</taxon>
        <taxon>Burkholderiaceae</taxon>
        <taxon>Cupriavidus</taxon>
    </lineage>
</organism>
<sequence length="449" mass="50162">MSNVIENLGKLDRKVTLAIPKAEVQKETQERLARLSKTVKMSGFRPGKVPMKMVEKQYGQQVEFEVRFDKAARKFFDITQAQEVKVAGQPKFDIKTEGVADDELAFEATFEVYPEVKIGDLASAEVTRTKTEIGDAEIDKTVDILRKQRVHFHARGDAGAHGDGGADVAAQNGDRVTLDFVGKIDGVEFAGGKAEDFVYVLGEGRMLPEFETATLGLKVGESKSFPLTFPADYHGKEVAGKTAEFTVTLKKVEWAHLPEVDDAFAKSLGIADGSVEKMRADIRENLEREVKRRTHSMLKDQVMEALLKVSELDVPKALVEQDQERLVEMARRDLEQRGMPNAKDMPIPAEMFTQQAERRVKLGLILAEIVKANGLEAKPDQIKAEIEDFAKSYEDPKEVMRWYYGDQQRLAEMEAYVLENNVVNFVCDKAKVADKTVSFEELTAAPAQA</sequence>
<evidence type="ECO:0000255" key="1">
    <source>
        <dbReference type="HAMAP-Rule" id="MF_00303"/>
    </source>
</evidence>
<keyword id="KW-0131">Cell cycle</keyword>
<keyword id="KW-0132">Cell division</keyword>
<keyword id="KW-0143">Chaperone</keyword>
<keyword id="KW-0963">Cytoplasm</keyword>
<keyword id="KW-0413">Isomerase</keyword>
<keyword id="KW-1185">Reference proteome</keyword>
<keyword id="KW-0697">Rotamase</keyword>
<name>TIG_CUPMC</name>
<dbReference type="EC" id="5.2.1.8" evidence="1"/>
<dbReference type="EMBL" id="CP000352">
    <property type="protein sequence ID" value="ABF08765.1"/>
    <property type="molecule type" value="Genomic_DNA"/>
</dbReference>
<dbReference type="RefSeq" id="WP_011516611.1">
    <property type="nucleotide sequence ID" value="NC_007973.1"/>
</dbReference>
<dbReference type="SMR" id="Q1LM61"/>
<dbReference type="STRING" id="266264.Rmet_1886"/>
<dbReference type="KEGG" id="rme:Rmet_1886"/>
<dbReference type="eggNOG" id="COG0544">
    <property type="taxonomic scope" value="Bacteria"/>
</dbReference>
<dbReference type="HOGENOM" id="CLU_033058_2_0_4"/>
<dbReference type="Proteomes" id="UP000002429">
    <property type="component" value="Chromosome"/>
</dbReference>
<dbReference type="GO" id="GO:0005737">
    <property type="term" value="C:cytoplasm"/>
    <property type="evidence" value="ECO:0007669"/>
    <property type="project" value="UniProtKB-SubCell"/>
</dbReference>
<dbReference type="GO" id="GO:0003755">
    <property type="term" value="F:peptidyl-prolyl cis-trans isomerase activity"/>
    <property type="evidence" value="ECO:0007669"/>
    <property type="project" value="UniProtKB-UniRule"/>
</dbReference>
<dbReference type="GO" id="GO:0044183">
    <property type="term" value="F:protein folding chaperone"/>
    <property type="evidence" value="ECO:0007669"/>
    <property type="project" value="TreeGrafter"/>
</dbReference>
<dbReference type="GO" id="GO:0043022">
    <property type="term" value="F:ribosome binding"/>
    <property type="evidence" value="ECO:0007669"/>
    <property type="project" value="TreeGrafter"/>
</dbReference>
<dbReference type="GO" id="GO:0051083">
    <property type="term" value="P:'de novo' cotranslational protein folding"/>
    <property type="evidence" value="ECO:0007669"/>
    <property type="project" value="TreeGrafter"/>
</dbReference>
<dbReference type="GO" id="GO:0051301">
    <property type="term" value="P:cell division"/>
    <property type="evidence" value="ECO:0007669"/>
    <property type="project" value="UniProtKB-KW"/>
</dbReference>
<dbReference type="GO" id="GO:0061077">
    <property type="term" value="P:chaperone-mediated protein folding"/>
    <property type="evidence" value="ECO:0007669"/>
    <property type="project" value="TreeGrafter"/>
</dbReference>
<dbReference type="GO" id="GO:0015031">
    <property type="term" value="P:protein transport"/>
    <property type="evidence" value="ECO:0007669"/>
    <property type="project" value="UniProtKB-UniRule"/>
</dbReference>
<dbReference type="GO" id="GO:0043335">
    <property type="term" value="P:protein unfolding"/>
    <property type="evidence" value="ECO:0007669"/>
    <property type="project" value="TreeGrafter"/>
</dbReference>
<dbReference type="FunFam" id="3.10.50.40:FF:000001">
    <property type="entry name" value="Trigger factor"/>
    <property type="match status" value="1"/>
</dbReference>
<dbReference type="Gene3D" id="3.10.50.40">
    <property type="match status" value="1"/>
</dbReference>
<dbReference type="Gene3D" id="3.30.70.1050">
    <property type="entry name" value="Trigger factor ribosome-binding domain"/>
    <property type="match status" value="1"/>
</dbReference>
<dbReference type="Gene3D" id="1.10.3120.10">
    <property type="entry name" value="Trigger factor, C-terminal domain"/>
    <property type="match status" value="1"/>
</dbReference>
<dbReference type="HAMAP" id="MF_00303">
    <property type="entry name" value="Trigger_factor_Tig"/>
    <property type="match status" value="1"/>
</dbReference>
<dbReference type="InterPro" id="IPR046357">
    <property type="entry name" value="PPIase_dom_sf"/>
</dbReference>
<dbReference type="InterPro" id="IPR001179">
    <property type="entry name" value="PPIase_FKBP_dom"/>
</dbReference>
<dbReference type="InterPro" id="IPR005215">
    <property type="entry name" value="Trig_fac"/>
</dbReference>
<dbReference type="InterPro" id="IPR008880">
    <property type="entry name" value="Trigger_fac_C"/>
</dbReference>
<dbReference type="InterPro" id="IPR037041">
    <property type="entry name" value="Trigger_fac_C_sf"/>
</dbReference>
<dbReference type="InterPro" id="IPR008881">
    <property type="entry name" value="Trigger_fac_ribosome-bd_bac"/>
</dbReference>
<dbReference type="InterPro" id="IPR036611">
    <property type="entry name" value="Trigger_fac_ribosome-bd_sf"/>
</dbReference>
<dbReference type="InterPro" id="IPR027304">
    <property type="entry name" value="Trigger_fact/SurA_dom_sf"/>
</dbReference>
<dbReference type="NCBIfam" id="TIGR00115">
    <property type="entry name" value="tig"/>
    <property type="match status" value="1"/>
</dbReference>
<dbReference type="PANTHER" id="PTHR30560">
    <property type="entry name" value="TRIGGER FACTOR CHAPERONE AND PEPTIDYL-PROLYL CIS/TRANS ISOMERASE"/>
    <property type="match status" value="1"/>
</dbReference>
<dbReference type="PANTHER" id="PTHR30560:SF3">
    <property type="entry name" value="TRIGGER FACTOR-LIKE PROTEIN TIG, CHLOROPLASTIC"/>
    <property type="match status" value="1"/>
</dbReference>
<dbReference type="Pfam" id="PF00254">
    <property type="entry name" value="FKBP_C"/>
    <property type="match status" value="1"/>
</dbReference>
<dbReference type="Pfam" id="PF05698">
    <property type="entry name" value="Trigger_C"/>
    <property type="match status" value="1"/>
</dbReference>
<dbReference type="Pfam" id="PF05697">
    <property type="entry name" value="Trigger_N"/>
    <property type="match status" value="1"/>
</dbReference>
<dbReference type="PIRSF" id="PIRSF003095">
    <property type="entry name" value="Trigger_factor"/>
    <property type="match status" value="1"/>
</dbReference>
<dbReference type="SUPFAM" id="SSF54534">
    <property type="entry name" value="FKBP-like"/>
    <property type="match status" value="1"/>
</dbReference>
<dbReference type="SUPFAM" id="SSF109998">
    <property type="entry name" value="Triger factor/SurA peptide-binding domain-like"/>
    <property type="match status" value="1"/>
</dbReference>
<dbReference type="SUPFAM" id="SSF102735">
    <property type="entry name" value="Trigger factor ribosome-binding domain"/>
    <property type="match status" value="1"/>
</dbReference>
<dbReference type="PROSITE" id="PS50059">
    <property type="entry name" value="FKBP_PPIASE"/>
    <property type="match status" value="1"/>
</dbReference>
<proteinExistence type="inferred from homology"/>
<feature type="chain" id="PRO_0000256599" description="Trigger factor">
    <location>
        <begin position="1"/>
        <end position="449"/>
    </location>
</feature>
<feature type="domain" description="PPIase FKBP-type" evidence="1">
    <location>
        <begin position="173"/>
        <end position="258"/>
    </location>
</feature>
<protein>
    <recommendedName>
        <fullName evidence="1">Trigger factor</fullName>
        <shortName evidence="1">TF</shortName>
        <ecNumber evidence="1">5.2.1.8</ecNumber>
    </recommendedName>
    <alternativeName>
        <fullName evidence="1">PPIase</fullName>
    </alternativeName>
</protein>
<comment type="function">
    <text evidence="1">Involved in protein export. Acts as a chaperone by maintaining the newly synthesized protein in an open conformation. Functions as a peptidyl-prolyl cis-trans isomerase.</text>
</comment>
<comment type="catalytic activity">
    <reaction evidence="1">
        <text>[protein]-peptidylproline (omega=180) = [protein]-peptidylproline (omega=0)</text>
        <dbReference type="Rhea" id="RHEA:16237"/>
        <dbReference type="Rhea" id="RHEA-COMP:10747"/>
        <dbReference type="Rhea" id="RHEA-COMP:10748"/>
        <dbReference type="ChEBI" id="CHEBI:83833"/>
        <dbReference type="ChEBI" id="CHEBI:83834"/>
        <dbReference type="EC" id="5.2.1.8"/>
    </reaction>
</comment>
<comment type="subcellular location">
    <subcellularLocation>
        <location>Cytoplasm</location>
    </subcellularLocation>
    <text evidence="1">About half TF is bound to the ribosome near the polypeptide exit tunnel while the other half is free in the cytoplasm.</text>
</comment>
<comment type="domain">
    <text evidence="1">Consists of 3 domains; the N-terminus binds the ribosome, the middle domain has PPIase activity, while the C-terminus has intrinsic chaperone activity on its own.</text>
</comment>
<comment type="similarity">
    <text evidence="1">Belongs to the FKBP-type PPIase family. Tig subfamily.</text>
</comment>
<reference key="1">
    <citation type="journal article" date="2010" name="PLoS ONE">
        <title>The complete genome sequence of Cupriavidus metallidurans strain CH34, a master survivalist in harsh and anthropogenic environments.</title>
        <authorList>
            <person name="Janssen P.J."/>
            <person name="Van Houdt R."/>
            <person name="Moors H."/>
            <person name="Monsieurs P."/>
            <person name="Morin N."/>
            <person name="Michaux A."/>
            <person name="Benotmane M.A."/>
            <person name="Leys N."/>
            <person name="Vallaeys T."/>
            <person name="Lapidus A."/>
            <person name="Monchy S."/>
            <person name="Medigue C."/>
            <person name="Taghavi S."/>
            <person name="McCorkle S."/>
            <person name="Dunn J."/>
            <person name="van der Lelie D."/>
            <person name="Mergeay M."/>
        </authorList>
    </citation>
    <scope>NUCLEOTIDE SEQUENCE [LARGE SCALE GENOMIC DNA]</scope>
    <source>
        <strain>ATCC 43123 / DSM 2839 / NBRC 102507 / CH34</strain>
    </source>
</reference>
<accession>Q1LM61</accession>
<gene>
    <name evidence="1" type="primary">tig</name>
    <name type="ordered locus">Rmet_1886</name>
</gene>